<reference key="1">
    <citation type="journal article" date="2004" name="Genome Res.">
        <title>The status, quality, and expansion of the NIH full-length cDNA project: the Mammalian Gene Collection (MGC).</title>
        <authorList>
            <consortium name="The MGC Project Team"/>
        </authorList>
    </citation>
    <scope>NUCLEOTIDE SEQUENCE [LARGE SCALE MRNA]</scope>
    <source>
        <tissue>Ovary</tissue>
    </source>
</reference>
<comment type="function">
    <text evidence="1">In mitochondria, S-adenosylmethionine-dependent methyltransferase chaperone that supports both coenzyme Q biosynthesis, by stabilizing its components, such as COQ5, and NADH:ubiquinone oxidoreductase complex (complex I, MT-ND1) assembly, by stabilizing complex I assembly factors, such as NDUFAF5.</text>
</comment>
<comment type="subunit">
    <text evidence="1">Interacts (via TRM112 domain) with NDUFAF5; the interaction is direct and stabilizes NDUFAF5 protein. Interacts with COQ5; the interaction is direct, stabilizes COQ5 protein and associates PYURF with COQ enzyme complex.</text>
</comment>
<comment type="subcellular location">
    <subcellularLocation>
        <location evidence="1">Mitochondrion</location>
    </subcellularLocation>
</comment>
<comment type="similarity">
    <text evidence="3">Belongs to the PREY family.</text>
</comment>
<organism>
    <name type="scientific">Rattus norvegicus</name>
    <name type="common">Rat</name>
    <dbReference type="NCBI Taxonomy" id="10116"/>
    <lineage>
        <taxon>Eukaryota</taxon>
        <taxon>Metazoa</taxon>
        <taxon>Chordata</taxon>
        <taxon>Craniata</taxon>
        <taxon>Vertebrata</taxon>
        <taxon>Euteleostomi</taxon>
        <taxon>Mammalia</taxon>
        <taxon>Eutheria</taxon>
        <taxon>Euarchontoglires</taxon>
        <taxon>Glires</taxon>
        <taxon>Rodentia</taxon>
        <taxon>Myomorpha</taxon>
        <taxon>Muroidea</taxon>
        <taxon>Muridae</taxon>
        <taxon>Murinae</taxon>
        <taxon>Rattus</taxon>
    </lineage>
</organism>
<name>PREY_RAT</name>
<proteinExistence type="inferred from homology"/>
<sequence length="112" mass="12652">MLTTTCRRLSQALQRPHALSAVAQRCLRAPGARSYADQNEKAEQPRTFHPALLQFLVCPLSKKPLRYDASTNELINDELGIAYPIIDGVPNMIPQAARTTRQKEKQEETKQH</sequence>
<feature type="transit peptide" description="Mitochondrion" evidence="2">
    <location>
        <begin position="1"/>
        <end position="34"/>
    </location>
</feature>
<feature type="chain" id="PRO_0000246317" description="Protein preY, mitochondrial">
    <location>
        <begin position="35"/>
        <end position="112"/>
    </location>
</feature>
<feature type="domain" description="TRM112">
    <location>
        <begin position="49"/>
        <end position="95"/>
    </location>
</feature>
<evidence type="ECO:0000250" key="1">
    <source>
        <dbReference type="UniProtKB" id="Q96I23"/>
    </source>
</evidence>
<evidence type="ECO:0000255" key="2"/>
<evidence type="ECO:0000305" key="3"/>
<accession>Q5U1Z8</accession>
<dbReference type="EMBL" id="BC086361">
    <property type="protein sequence ID" value="AAH86361.1"/>
    <property type="molecule type" value="mRNA"/>
</dbReference>
<dbReference type="RefSeq" id="NP_001019541.1">
    <property type="nucleotide sequence ID" value="NM_001024370.2"/>
</dbReference>
<dbReference type="SMR" id="Q5U1Z8"/>
<dbReference type="FunCoup" id="Q5U1Z8">
    <property type="interactions" value="892"/>
</dbReference>
<dbReference type="STRING" id="10116.ENSRNOP00000008973"/>
<dbReference type="iPTMnet" id="Q5U1Z8"/>
<dbReference type="PhosphoSitePlus" id="Q5U1Z8"/>
<dbReference type="PaxDb" id="10116-ENSRNOP00000008973"/>
<dbReference type="Ensembl" id="ENSRNOT00000008973.6">
    <property type="protein sequence ID" value="ENSRNOP00000008973.4"/>
    <property type="gene ID" value="ENSRNOG00000006858.6"/>
</dbReference>
<dbReference type="GeneID" id="502782"/>
<dbReference type="KEGG" id="rno:502782"/>
<dbReference type="UCSC" id="RGD:1565524">
    <property type="organism name" value="rat"/>
</dbReference>
<dbReference type="AGR" id="RGD:1565524"/>
<dbReference type="CTD" id="100996939"/>
<dbReference type="RGD" id="1565524">
    <property type="gene designation" value="Pyurf"/>
</dbReference>
<dbReference type="eggNOG" id="ENOG502S7H4">
    <property type="taxonomic scope" value="Eukaryota"/>
</dbReference>
<dbReference type="GeneTree" id="ENSGT00390000015889"/>
<dbReference type="HOGENOM" id="CLU_155659_0_0_1"/>
<dbReference type="InParanoid" id="Q5U1Z8"/>
<dbReference type="OMA" id="EYPIWQG"/>
<dbReference type="OrthoDB" id="78690at9989"/>
<dbReference type="PhylomeDB" id="Q5U1Z8"/>
<dbReference type="TreeFam" id="TF337006"/>
<dbReference type="PRO" id="PR:Q5U1Z8"/>
<dbReference type="Proteomes" id="UP000002494">
    <property type="component" value="Chromosome 4"/>
</dbReference>
<dbReference type="Bgee" id="ENSRNOG00000006858">
    <property type="expression patterns" value="Expressed in heart and 20 other cell types or tissues"/>
</dbReference>
<dbReference type="GO" id="GO:0005789">
    <property type="term" value="C:endoplasmic reticulum membrane"/>
    <property type="evidence" value="ECO:0000250"/>
    <property type="project" value="HGNC-UCL"/>
</dbReference>
<dbReference type="GO" id="GO:0005739">
    <property type="term" value="C:mitochondrion"/>
    <property type="evidence" value="ECO:0000250"/>
    <property type="project" value="UniProtKB"/>
</dbReference>
<dbReference type="GO" id="GO:0050821">
    <property type="term" value="P:protein stabilization"/>
    <property type="evidence" value="ECO:0000250"/>
    <property type="project" value="UniProtKB"/>
</dbReference>
<dbReference type="FunFam" id="2.20.25.10:FF:000017">
    <property type="entry name" value="protein preY, mitochondrial"/>
    <property type="match status" value="1"/>
</dbReference>
<dbReference type="Gene3D" id="2.20.25.10">
    <property type="match status" value="1"/>
</dbReference>
<dbReference type="HAMAP" id="MF_01187">
    <property type="entry name" value="UPF0434"/>
    <property type="match status" value="1"/>
</dbReference>
<dbReference type="InterPro" id="IPR005651">
    <property type="entry name" value="Trm112-like"/>
</dbReference>
<dbReference type="PANTHER" id="PTHR33505:SF4">
    <property type="entry name" value="PROTEIN PREY, MITOCHONDRIAL"/>
    <property type="match status" value="1"/>
</dbReference>
<dbReference type="PANTHER" id="PTHR33505">
    <property type="entry name" value="ZGC:162634"/>
    <property type="match status" value="1"/>
</dbReference>
<dbReference type="Pfam" id="PF03966">
    <property type="entry name" value="Trm112p"/>
    <property type="match status" value="1"/>
</dbReference>
<dbReference type="SUPFAM" id="SSF158997">
    <property type="entry name" value="Trm112p-like"/>
    <property type="match status" value="1"/>
</dbReference>
<keyword id="KW-0496">Mitochondrion</keyword>
<keyword id="KW-1185">Reference proteome</keyword>
<keyword id="KW-0809">Transit peptide</keyword>
<gene>
    <name type="primary">Pyurf</name>
    <name type="synonym">Pigy</name>
    <name type="synonym">Prey</name>
</gene>
<protein>
    <recommendedName>
        <fullName>Protein preY, mitochondrial</fullName>
    </recommendedName>
</protein>